<feature type="chain" id="PRO_1000023707" description="Transcription antitermination protein NusB">
    <location>
        <begin position="1"/>
        <end position="130"/>
    </location>
</feature>
<comment type="function">
    <text evidence="1">Involved in transcription antitermination. Required for transcription of ribosomal RNA (rRNA) genes. Binds specifically to the boxA antiterminator sequence of the ribosomal RNA (rrn) operons.</text>
</comment>
<comment type="similarity">
    <text evidence="1">Belongs to the NusB family.</text>
</comment>
<evidence type="ECO:0000255" key="1">
    <source>
        <dbReference type="HAMAP-Rule" id="MF_00073"/>
    </source>
</evidence>
<keyword id="KW-0694">RNA-binding</keyword>
<keyword id="KW-0804">Transcription</keyword>
<keyword id="KW-0889">Transcription antitermination</keyword>
<keyword id="KW-0805">Transcription regulation</keyword>
<gene>
    <name evidence="1" type="primary">nusB</name>
    <name type="ordered locus">RBAM_022650</name>
</gene>
<sequence>MKRRTAREKALQALFQIDVSDIAPNDAIEHALDGEKTDAFFEQLVYGVIEHQVQLDEMISGHLVNWKLDRIANVDRAILRLAVYEMVYSDDIPANVSLNEAIELAKRFGDDKAAKFVNGVLSNIKTDIES</sequence>
<dbReference type="EMBL" id="CP000560">
    <property type="protein sequence ID" value="ABS74626.1"/>
    <property type="molecule type" value="Genomic_DNA"/>
</dbReference>
<dbReference type="RefSeq" id="WP_007408349.1">
    <property type="nucleotide sequence ID" value="NC_009725.2"/>
</dbReference>
<dbReference type="SMR" id="A7Z6K0"/>
<dbReference type="GeneID" id="93081403"/>
<dbReference type="KEGG" id="bay:RBAM_022650"/>
<dbReference type="HOGENOM" id="CLU_087843_3_3_9"/>
<dbReference type="Proteomes" id="UP000001120">
    <property type="component" value="Chromosome"/>
</dbReference>
<dbReference type="GO" id="GO:0005829">
    <property type="term" value="C:cytosol"/>
    <property type="evidence" value="ECO:0007669"/>
    <property type="project" value="TreeGrafter"/>
</dbReference>
<dbReference type="GO" id="GO:0003723">
    <property type="term" value="F:RNA binding"/>
    <property type="evidence" value="ECO:0007669"/>
    <property type="project" value="UniProtKB-UniRule"/>
</dbReference>
<dbReference type="GO" id="GO:0006353">
    <property type="term" value="P:DNA-templated transcription termination"/>
    <property type="evidence" value="ECO:0007669"/>
    <property type="project" value="UniProtKB-UniRule"/>
</dbReference>
<dbReference type="GO" id="GO:0031564">
    <property type="term" value="P:transcription antitermination"/>
    <property type="evidence" value="ECO:0007669"/>
    <property type="project" value="UniProtKB-KW"/>
</dbReference>
<dbReference type="CDD" id="cd00619">
    <property type="entry name" value="Terminator_NusB"/>
    <property type="match status" value="1"/>
</dbReference>
<dbReference type="FunFam" id="1.10.940.10:FF:000003">
    <property type="entry name" value="Transcription antitermination factor NusB"/>
    <property type="match status" value="1"/>
</dbReference>
<dbReference type="Gene3D" id="1.10.940.10">
    <property type="entry name" value="NusB-like"/>
    <property type="match status" value="1"/>
</dbReference>
<dbReference type="HAMAP" id="MF_00073">
    <property type="entry name" value="NusB"/>
    <property type="match status" value="1"/>
</dbReference>
<dbReference type="InterPro" id="IPR035926">
    <property type="entry name" value="NusB-like_sf"/>
</dbReference>
<dbReference type="InterPro" id="IPR011605">
    <property type="entry name" value="NusB_fam"/>
</dbReference>
<dbReference type="InterPro" id="IPR006027">
    <property type="entry name" value="NusB_RsmB_TIM44"/>
</dbReference>
<dbReference type="NCBIfam" id="TIGR01951">
    <property type="entry name" value="nusB"/>
    <property type="match status" value="1"/>
</dbReference>
<dbReference type="PANTHER" id="PTHR11078:SF3">
    <property type="entry name" value="ANTITERMINATION NUSB DOMAIN-CONTAINING PROTEIN"/>
    <property type="match status" value="1"/>
</dbReference>
<dbReference type="PANTHER" id="PTHR11078">
    <property type="entry name" value="N UTILIZATION SUBSTANCE PROTEIN B-RELATED"/>
    <property type="match status" value="1"/>
</dbReference>
<dbReference type="Pfam" id="PF01029">
    <property type="entry name" value="NusB"/>
    <property type="match status" value="1"/>
</dbReference>
<dbReference type="SUPFAM" id="SSF48013">
    <property type="entry name" value="NusB-like"/>
    <property type="match status" value="1"/>
</dbReference>
<accession>A7Z6K0</accession>
<organism>
    <name type="scientific">Bacillus velezensis (strain DSM 23117 / BGSC 10A6 / LMG 26770 / FZB42)</name>
    <name type="common">Bacillus amyloliquefaciens subsp. plantarum</name>
    <dbReference type="NCBI Taxonomy" id="326423"/>
    <lineage>
        <taxon>Bacteria</taxon>
        <taxon>Bacillati</taxon>
        <taxon>Bacillota</taxon>
        <taxon>Bacilli</taxon>
        <taxon>Bacillales</taxon>
        <taxon>Bacillaceae</taxon>
        <taxon>Bacillus</taxon>
        <taxon>Bacillus amyloliquefaciens group</taxon>
    </lineage>
</organism>
<proteinExistence type="inferred from homology"/>
<name>NUSB_BACVZ</name>
<protein>
    <recommendedName>
        <fullName evidence="1">Transcription antitermination protein NusB</fullName>
    </recommendedName>
    <alternativeName>
        <fullName evidence="1">Antitermination factor NusB</fullName>
    </alternativeName>
</protein>
<reference key="1">
    <citation type="journal article" date="2007" name="Nat. Biotechnol.">
        <title>Comparative analysis of the complete genome sequence of the plant growth-promoting bacterium Bacillus amyloliquefaciens FZB42.</title>
        <authorList>
            <person name="Chen X.H."/>
            <person name="Koumoutsi A."/>
            <person name="Scholz R."/>
            <person name="Eisenreich A."/>
            <person name="Schneider K."/>
            <person name="Heinemeyer I."/>
            <person name="Morgenstern B."/>
            <person name="Voss B."/>
            <person name="Hess W.R."/>
            <person name="Reva O."/>
            <person name="Junge H."/>
            <person name="Voigt B."/>
            <person name="Jungblut P.R."/>
            <person name="Vater J."/>
            <person name="Suessmuth R."/>
            <person name="Liesegang H."/>
            <person name="Strittmatter A."/>
            <person name="Gottschalk G."/>
            <person name="Borriss R."/>
        </authorList>
    </citation>
    <scope>NUCLEOTIDE SEQUENCE [LARGE SCALE GENOMIC DNA]</scope>
    <source>
        <strain>DSM 23117 / BGSC 10A6 / LMG 26770 / FZB42</strain>
    </source>
</reference>